<proteinExistence type="inferred from homology"/>
<comment type="function">
    <text evidence="1">Binds directly to 23S rRNA. The L1 stalk is quite mobile in the ribosome, and is involved in E site tRNA release.</text>
</comment>
<comment type="function">
    <text evidence="1">Protein L1 is also a translational repressor protein, it controls the translation of the L11 operon by binding to its mRNA.</text>
</comment>
<comment type="subunit">
    <text evidence="1">Part of the 50S ribosomal subunit.</text>
</comment>
<comment type="similarity">
    <text evidence="1">Belongs to the universal ribosomal protein uL1 family.</text>
</comment>
<accession>B9JVM5</accession>
<evidence type="ECO:0000255" key="1">
    <source>
        <dbReference type="HAMAP-Rule" id="MF_01318"/>
    </source>
</evidence>
<evidence type="ECO:0000305" key="2"/>
<protein>
    <recommendedName>
        <fullName evidence="1">Large ribosomal subunit protein uL1</fullName>
    </recommendedName>
    <alternativeName>
        <fullName evidence="2">50S ribosomal protein L1</fullName>
    </alternativeName>
</protein>
<feature type="chain" id="PRO_1000165651" description="Large ribosomal subunit protein uL1">
    <location>
        <begin position="1"/>
        <end position="231"/>
    </location>
</feature>
<organism>
    <name type="scientific">Allorhizobium ampelinum (strain ATCC BAA-846 / DSM 112012 / S4)</name>
    <name type="common">Agrobacterium vitis (strain S4)</name>
    <dbReference type="NCBI Taxonomy" id="311402"/>
    <lineage>
        <taxon>Bacteria</taxon>
        <taxon>Pseudomonadati</taxon>
        <taxon>Pseudomonadota</taxon>
        <taxon>Alphaproteobacteria</taxon>
        <taxon>Hyphomicrobiales</taxon>
        <taxon>Rhizobiaceae</taxon>
        <taxon>Rhizobium/Agrobacterium group</taxon>
        <taxon>Allorhizobium</taxon>
        <taxon>Allorhizobium ampelinum</taxon>
    </lineage>
</organism>
<sequence length="231" mass="24083">MAKLAKRIQKIREGVDPTKLVALSDAISMVKERAVAKFDETIEIAMNLGVDPRHADQMVRGVVNLPNGTGRDVRVAVFARGAKADEARAAGAEVVGAEDLVEIVQGGKIDFDRCIATPDMMPLVGRLGKVLGPRGMMPNPKVGTVTMDVAGAVKASKGGAVEFRVEKAGIIHAGIGKASFEAKALEENIKAFADAVIKAKPAGAKGNYVKRVAISSTMGPGVKIDPSSVTA</sequence>
<reference key="1">
    <citation type="journal article" date="2009" name="J. Bacteriol.">
        <title>Genome sequences of three Agrobacterium biovars help elucidate the evolution of multichromosome genomes in bacteria.</title>
        <authorList>
            <person name="Slater S.C."/>
            <person name="Goldman B.S."/>
            <person name="Goodner B."/>
            <person name="Setubal J.C."/>
            <person name="Farrand S.K."/>
            <person name="Nester E.W."/>
            <person name="Burr T.J."/>
            <person name="Banta L."/>
            <person name="Dickerman A.W."/>
            <person name="Paulsen I."/>
            <person name="Otten L."/>
            <person name="Suen G."/>
            <person name="Welch R."/>
            <person name="Almeida N.F."/>
            <person name="Arnold F."/>
            <person name="Burton O.T."/>
            <person name="Du Z."/>
            <person name="Ewing A."/>
            <person name="Godsy E."/>
            <person name="Heisel S."/>
            <person name="Houmiel K.L."/>
            <person name="Jhaveri J."/>
            <person name="Lu J."/>
            <person name="Miller N.M."/>
            <person name="Norton S."/>
            <person name="Chen Q."/>
            <person name="Phoolcharoen W."/>
            <person name="Ohlin V."/>
            <person name="Ondrusek D."/>
            <person name="Pride N."/>
            <person name="Stricklin S.L."/>
            <person name="Sun J."/>
            <person name="Wheeler C."/>
            <person name="Wilson L."/>
            <person name="Zhu H."/>
            <person name="Wood D.W."/>
        </authorList>
    </citation>
    <scope>NUCLEOTIDE SEQUENCE [LARGE SCALE GENOMIC DNA]</scope>
    <source>
        <strain>ATCC BAA-846 / DSM 112012 / S4</strain>
    </source>
</reference>
<dbReference type="EMBL" id="CP000633">
    <property type="protein sequence ID" value="ACM36305.1"/>
    <property type="molecule type" value="Genomic_DNA"/>
</dbReference>
<dbReference type="RefSeq" id="WP_015915728.1">
    <property type="nucleotide sequence ID" value="NC_011989.1"/>
</dbReference>
<dbReference type="SMR" id="B9JVM5"/>
<dbReference type="STRING" id="311402.Avi_1820"/>
<dbReference type="KEGG" id="avi:Avi_1820"/>
<dbReference type="eggNOG" id="COG0081">
    <property type="taxonomic scope" value="Bacteria"/>
</dbReference>
<dbReference type="HOGENOM" id="CLU_062853_0_0_5"/>
<dbReference type="Proteomes" id="UP000001596">
    <property type="component" value="Chromosome 1"/>
</dbReference>
<dbReference type="GO" id="GO:0022625">
    <property type="term" value="C:cytosolic large ribosomal subunit"/>
    <property type="evidence" value="ECO:0007669"/>
    <property type="project" value="TreeGrafter"/>
</dbReference>
<dbReference type="GO" id="GO:0019843">
    <property type="term" value="F:rRNA binding"/>
    <property type="evidence" value="ECO:0007669"/>
    <property type="project" value="UniProtKB-UniRule"/>
</dbReference>
<dbReference type="GO" id="GO:0003735">
    <property type="term" value="F:structural constituent of ribosome"/>
    <property type="evidence" value="ECO:0007669"/>
    <property type="project" value="InterPro"/>
</dbReference>
<dbReference type="GO" id="GO:0000049">
    <property type="term" value="F:tRNA binding"/>
    <property type="evidence" value="ECO:0007669"/>
    <property type="project" value="UniProtKB-KW"/>
</dbReference>
<dbReference type="GO" id="GO:0006417">
    <property type="term" value="P:regulation of translation"/>
    <property type="evidence" value="ECO:0007669"/>
    <property type="project" value="UniProtKB-KW"/>
</dbReference>
<dbReference type="GO" id="GO:0006412">
    <property type="term" value="P:translation"/>
    <property type="evidence" value="ECO:0007669"/>
    <property type="project" value="UniProtKB-UniRule"/>
</dbReference>
<dbReference type="CDD" id="cd00403">
    <property type="entry name" value="Ribosomal_L1"/>
    <property type="match status" value="1"/>
</dbReference>
<dbReference type="FunFam" id="3.40.50.790:FF:000001">
    <property type="entry name" value="50S ribosomal protein L1"/>
    <property type="match status" value="1"/>
</dbReference>
<dbReference type="Gene3D" id="3.30.190.20">
    <property type="match status" value="1"/>
</dbReference>
<dbReference type="Gene3D" id="3.40.50.790">
    <property type="match status" value="1"/>
</dbReference>
<dbReference type="HAMAP" id="MF_01318_B">
    <property type="entry name" value="Ribosomal_uL1_B"/>
    <property type="match status" value="1"/>
</dbReference>
<dbReference type="InterPro" id="IPR005878">
    <property type="entry name" value="Ribosom_uL1_bac-type"/>
</dbReference>
<dbReference type="InterPro" id="IPR002143">
    <property type="entry name" value="Ribosomal_uL1"/>
</dbReference>
<dbReference type="InterPro" id="IPR023674">
    <property type="entry name" value="Ribosomal_uL1-like"/>
</dbReference>
<dbReference type="InterPro" id="IPR028364">
    <property type="entry name" value="Ribosomal_uL1/biogenesis"/>
</dbReference>
<dbReference type="InterPro" id="IPR016095">
    <property type="entry name" value="Ribosomal_uL1_3-a/b-sand"/>
</dbReference>
<dbReference type="InterPro" id="IPR023673">
    <property type="entry name" value="Ribosomal_uL1_CS"/>
</dbReference>
<dbReference type="NCBIfam" id="TIGR01169">
    <property type="entry name" value="rplA_bact"/>
    <property type="match status" value="1"/>
</dbReference>
<dbReference type="PANTHER" id="PTHR36427">
    <property type="entry name" value="54S RIBOSOMAL PROTEIN L1, MITOCHONDRIAL"/>
    <property type="match status" value="1"/>
</dbReference>
<dbReference type="PANTHER" id="PTHR36427:SF3">
    <property type="entry name" value="LARGE RIBOSOMAL SUBUNIT PROTEIN UL1M"/>
    <property type="match status" value="1"/>
</dbReference>
<dbReference type="Pfam" id="PF00687">
    <property type="entry name" value="Ribosomal_L1"/>
    <property type="match status" value="1"/>
</dbReference>
<dbReference type="PIRSF" id="PIRSF002155">
    <property type="entry name" value="Ribosomal_L1"/>
    <property type="match status" value="1"/>
</dbReference>
<dbReference type="SUPFAM" id="SSF56808">
    <property type="entry name" value="Ribosomal protein L1"/>
    <property type="match status" value="1"/>
</dbReference>
<dbReference type="PROSITE" id="PS01199">
    <property type="entry name" value="RIBOSOMAL_L1"/>
    <property type="match status" value="1"/>
</dbReference>
<gene>
    <name evidence="1" type="primary">rplA</name>
    <name type="ordered locus">Avi_1820</name>
</gene>
<keyword id="KW-1185">Reference proteome</keyword>
<keyword id="KW-0678">Repressor</keyword>
<keyword id="KW-0687">Ribonucleoprotein</keyword>
<keyword id="KW-0689">Ribosomal protein</keyword>
<keyword id="KW-0694">RNA-binding</keyword>
<keyword id="KW-0699">rRNA-binding</keyword>
<keyword id="KW-0810">Translation regulation</keyword>
<keyword id="KW-0820">tRNA-binding</keyword>
<name>RL1_ALLAM</name>